<gene>
    <name type="primary">DHX35</name>
    <name type="synonym">C20orf15</name>
    <name type="synonym">DDX35</name>
</gene>
<accession>Q9H5Z1</accession>
<accession>A2RTX3</accession>
<accession>B4E0J0</accession>
<accession>F5GXM6</accession>
<accession>Q5THR0</accession>
<accession>Q9H4H7</accession>
<accession>Q9H6T6</accession>
<reference key="1">
    <citation type="journal article" date="2004" name="Nat. Genet.">
        <title>Complete sequencing and characterization of 21,243 full-length human cDNAs.</title>
        <authorList>
            <person name="Ota T."/>
            <person name="Suzuki Y."/>
            <person name="Nishikawa T."/>
            <person name="Otsuki T."/>
            <person name="Sugiyama T."/>
            <person name="Irie R."/>
            <person name="Wakamatsu A."/>
            <person name="Hayashi K."/>
            <person name="Sato H."/>
            <person name="Nagai K."/>
            <person name="Kimura K."/>
            <person name="Makita H."/>
            <person name="Sekine M."/>
            <person name="Obayashi M."/>
            <person name="Nishi T."/>
            <person name="Shibahara T."/>
            <person name="Tanaka T."/>
            <person name="Ishii S."/>
            <person name="Yamamoto J."/>
            <person name="Saito K."/>
            <person name="Kawai Y."/>
            <person name="Isono Y."/>
            <person name="Nakamura Y."/>
            <person name="Nagahari K."/>
            <person name="Murakami K."/>
            <person name="Yasuda T."/>
            <person name="Iwayanagi T."/>
            <person name="Wagatsuma M."/>
            <person name="Shiratori A."/>
            <person name="Sudo H."/>
            <person name="Hosoiri T."/>
            <person name="Kaku Y."/>
            <person name="Kodaira H."/>
            <person name="Kondo H."/>
            <person name="Sugawara M."/>
            <person name="Takahashi M."/>
            <person name="Kanda K."/>
            <person name="Yokoi T."/>
            <person name="Furuya T."/>
            <person name="Kikkawa E."/>
            <person name="Omura Y."/>
            <person name="Abe K."/>
            <person name="Kamihara K."/>
            <person name="Katsuta N."/>
            <person name="Sato K."/>
            <person name="Tanikawa M."/>
            <person name="Yamazaki M."/>
            <person name="Ninomiya K."/>
            <person name="Ishibashi T."/>
            <person name="Yamashita H."/>
            <person name="Murakawa K."/>
            <person name="Fujimori K."/>
            <person name="Tanai H."/>
            <person name="Kimata M."/>
            <person name="Watanabe M."/>
            <person name="Hiraoka S."/>
            <person name="Chiba Y."/>
            <person name="Ishida S."/>
            <person name="Ono Y."/>
            <person name="Takiguchi S."/>
            <person name="Watanabe S."/>
            <person name="Yosida M."/>
            <person name="Hotuta T."/>
            <person name="Kusano J."/>
            <person name="Kanehori K."/>
            <person name="Takahashi-Fujii A."/>
            <person name="Hara H."/>
            <person name="Tanase T.-O."/>
            <person name="Nomura Y."/>
            <person name="Togiya S."/>
            <person name="Komai F."/>
            <person name="Hara R."/>
            <person name="Takeuchi K."/>
            <person name="Arita M."/>
            <person name="Imose N."/>
            <person name="Musashino K."/>
            <person name="Yuuki H."/>
            <person name="Oshima A."/>
            <person name="Sasaki N."/>
            <person name="Aotsuka S."/>
            <person name="Yoshikawa Y."/>
            <person name="Matsunawa H."/>
            <person name="Ichihara T."/>
            <person name="Shiohata N."/>
            <person name="Sano S."/>
            <person name="Moriya S."/>
            <person name="Momiyama H."/>
            <person name="Satoh N."/>
            <person name="Takami S."/>
            <person name="Terashima Y."/>
            <person name="Suzuki O."/>
            <person name="Nakagawa S."/>
            <person name="Senoh A."/>
            <person name="Mizoguchi H."/>
            <person name="Goto Y."/>
            <person name="Shimizu F."/>
            <person name="Wakebe H."/>
            <person name="Hishigaki H."/>
            <person name="Watanabe T."/>
            <person name="Sugiyama A."/>
            <person name="Takemoto M."/>
            <person name="Kawakami B."/>
            <person name="Yamazaki M."/>
            <person name="Watanabe K."/>
            <person name="Kumagai A."/>
            <person name="Itakura S."/>
            <person name="Fukuzumi Y."/>
            <person name="Fujimori Y."/>
            <person name="Komiyama M."/>
            <person name="Tashiro H."/>
            <person name="Tanigami A."/>
            <person name="Fujiwara T."/>
            <person name="Ono T."/>
            <person name="Yamada K."/>
            <person name="Fujii Y."/>
            <person name="Ozaki K."/>
            <person name="Hirao M."/>
            <person name="Ohmori Y."/>
            <person name="Kawabata A."/>
            <person name="Hikiji T."/>
            <person name="Kobatake N."/>
            <person name="Inagaki H."/>
            <person name="Ikema Y."/>
            <person name="Okamoto S."/>
            <person name="Okitani R."/>
            <person name="Kawakami T."/>
            <person name="Noguchi S."/>
            <person name="Itoh T."/>
            <person name="Shigeta K."/>
            <person name="Senba T."/>
            <person name="Matsumura K."/>
            <person name="Nakajima Y."/>
            <person name="Mizuno T."/>
            <person name="Morinaga M."/>
            <person name="Sasaki M."/>
            <person name="Togashi T."/>
            <person name="Oyama M."/>
            <person name="Hata H."/>
            <person name="Watanabe M."/>
            <person name="Komatsu T."/>
            <person name="Mizushima-Sugano J."/>
            <person name="Satoh T."/>
            <person name="Shirai Y."/>
            <person name="Takahashi Y."/>
            <person name="Nakagawa K."/>
            <person name="Okumura K."/>
            <person name="Nagase T."/>
            <person name="Nomura N."/>
            <person name="Kikuchi H."/>
            <person name="Masuho Y."/>
            <person name="Yamashita R."/>
            <person name="Nakai K."/>
            <person name="Yada T."/>
            <person name="Nakamura Y."/>
            <person name="Ohara O."/>
            <person name="Isogai T."/>
            <person name="Sugano S."/>
        </authorList>
    </citation>
    <scope>NUCLEOTIDE SEQUENCE [LARGE SCALE MRNA] (ISOFORMS 1 AND 2)</scope>
    <source>
        <tissue>Ileal mucosa</tissue>
        <tissue>Thymus</tissue>
    </source>
</reference>
<reference key="2">
    <citation type="journal article" date="2001" name="Nature">
        <title>The DNA sequence and comparative analysis of human chromosome 20.</title>
        <authorList>
            <person name="Deloukas P."/>
            <person name="Matthews L.H."/>
            <person name="Ashurst J.L."/>
            <person name="Burton J."/>
            <person name="Gilbert J.G.R."/>
            <person name="Jones M."/>
            <person name="Stavrides G."/>
            <person name="Almeida J.P."/>
            <person name="Babbage A.K."/>
            <person name="Bagguley C.L."/>
            <person name="Bailey J."/>
            <person name="Barlow K.F."/>
            <person name="Bates K.N."/>
            <person name="Beard L.M."/>
            <person name="Beare D.M."/>
            <person name="Beasley O.P."/>
            <person name="Bird C.P."/>
            <person name="Blakey S.E."/>
            <person name="Bridgeman A.M."/>
            <person name="Brown A.J."/>
            <person name="Buck D."/>
            <person name="Burrill W.D."/>
            <person name="Butler A.P."/>
            <person name="Carder C."/>
            <person name="Carter N.P."/>
            <person name="Chapman J.C."/>
            <person name="Clamp M."/>
            <person name="Clark G."/>
            <person name="Clark L.N."/>
            <person name="Clark S.Y."/>
            <person name="Clee C.M."/>
            <person name="Clegg S."/>
            <person name="Cobley V.E."/>
            <person name="Collier R.E."/>
            <person name="Connor R.E."/>
            <person name="Corby N.R."/>
            <person name="Coulson A."/>
            <person name="Coville G.J."/>
            <person name="Deadman R."/>
            <person name="Dhami P.D."/>
            <person name="Dunn M."/>
            <person name="Ellington A.G."/>
            <person name="Frankland J.A."/>
            <person name="Fraser A."/>
            <person name="French L."/>
            <person name="Garner P."/>
            <person name="Grafham D.V."/>
            <person name="Griffiths C."/>
            <person name="Griffiths M.N.D."/>
            <person name="Gwilliam R."/>
            <person name="Hall R.E."/>
            <person name="Hammond S."/>
            <person name="Harley J.L."/>
            <person name="Heath P.D."/>
            <person name="Ho S."/>
            <person name="Holden J.L."/>
            <person name="Howden P.J."/>
            <person name="Huckle E."/>
            <person name="Hunt A.R."/>
            <person name="Hunt S.E."/>
            <person name="Jekosch K."/>
            <person name="Johnson C.M."/>
            <person name="Johnson D."/>
            <person name="Kay M.P."/>
            <person name="Kimberley A.M."/>
            <person name="King A."/>
            <person name="Knights A."/>
            <person name="Laird G.K."/>
            <person name="Lawlor S."/>
            <person name="Lehvaeslaiho M.H."/>
            <person name="Leversha M.A."/>
            <person name="Lloyd C."/>
            <person name="Lloyd D.M."/>
            <person name="Lovell J.D."/>
            <person name="Marsh V.L."/>
            <person name="Martin S.L."/>
            <person name="McConnachie L.J."/>
            <person name="McLay K."/>
            <person name="McMurray A.A."/>
            <person name="Milne S.A."/>
            <person name="Mistry D."/>
            <person name="Moore M.J.F."/>
            <person name="Mullikin J.C."/>
            <person name="Nickerson T."/>
            <person name="Oliver K."/>
            <person name="Parker A."/>
            <person name="Patel R."/>
            <person name="Pearce T.A.V."/>
            <person name="Peck A.I."/>
            <person name="Phillimore B.J.C.T."/>
            <person name="Prathalingam S.R."/>
            <person name="Plumb R.W."/>
            <person name="Ramsay H."/>
            <person name="Rice C.M."/>
            <person name="Ross M.T."/>
            <person name="Scott C.E."/>
            <person name="Sehra H.K."/>
            <person name="Shownkeen R."/>
            <person name="Sims S."/>
            <person name="Skuce C.D."/>
            <person name="Smith M.L."/>
            <person name="Soderlund C."/>
            <person name="Steward C.A."/>
            <person name="Sulston J.E."/>
            <person name="Swann R.M."/>
            <person name="Sycamore N."/>
            <person name="Taylor R."/>
            <person name="Tee L."/>
            <person name="Thomas D.W."/>
            <person name="Thorpe A."/>
            <person name="Tracey A."/>
            <person name="Tromans A.C."/>
            <person name="Vaudin M."/>
            <person name="Wall M."/>
            <person name="Wallis J.M."/>
            <person name="Whitehead S.L."/>
            <person name="Whittaker P."/>
            <person name="Willey D.L."/>
            <person name="Williams L."/>
            <person name="Williams S.A."/>
            <person name="Wilming L."/>
            <person name="Wray P.W."/>
            <person name="Hubbard T."/>
            <person name="Durbin R.M."/>
            <person name="Bentley D.R."/>
            <person name="Beck S."/>
            <person name="Rogers J."/>
        </authorList>
    </citation>
    <scope>NUCLEOTIDE SEQUENCE [LARGE SCALE GENOMIC DNA]</scope>
</reference>
<reference key="3">
    <citation type="submission" date="2005-09" db="EMBL/GenBank/DDBJ databases">
        <authorList>
            <person name="Mural R.J."/>
            <person name="Istrail S."/>
            <person name="Sutton G.G."/>
            <person name="Florea L."/>
            <person name="Halpern A.L."/>
            <person name="Mobarry C.M."/>
            <person name="Lippert R."/>
            <person name="Walenz B."/>
            <person name="Shatkay H."/>
            <person name="Dew I."/>
            <person name="Miller J.R."/>
            <person name="Flanigan M.J."/>
            <person name="Edwards N.J."/>
            <person name="Bolanos R."/>
            <person name="Fasulo D."/>
            <person name="Halldorsson B.V."/>
            <person name="Hannenhalli S."/>
            <person name="Turner R."/>
            <person name="Yooseph S."/>
            <person name="Lu F."/>
            <person name="Nusskern D.R."/>
            <person name="Shue B.C."/>
            <person name="Zheng X.H."/>
            <person name="Zhong F."/>
            <person name="Delcher A.L."/>
            <person name="Huson D.H."/>
            <person name="Kravitz S.A."/>
            <person name="Mouchard L."/>
            <person name="Reinert K."/>
            <person name="Remington K.A."/>
            <person name="Clark A.G."/>
            <person name="Waterman M.S."/>
            <person name="Eichler E.E."/>
            <person name="Adams M.D."/>
            <person name="Hunkapiller M.W."/>
            <person name="Myers E.W."/>
            <person name="Venter J.C."/>
        </authorList>
    </citation>
    <scope>NUCLEOTIDE SEQUENCE [LARGE SCALE GENOMIC DNA]</scope>
</reference>
<reference key="4">
    <citation type="journal article" date="2004" name="Genome Res.">
        <title>The status, quality, and expansion of the NIH full-length cDNA project: the Mammalian Gene Collection (MGC).</title>
        <authorList>
            <consortium name="The MGC Project Team"/>
        </authorList>
    </citation>
    <scope>NUCLEOTIDE SEQUENCE [LARGE SCALE MRNA] (ISOFORM 1)</scope>
    <source>
        <tissue>Brain</tissue>
    </source>
</reference>
<reference key="5">
    <citation type="journal article" date="2002" name="RNA">
        <title>Purification and characterization of native spliceosomes suitable for three-dimensional structural analysis.</title>
        <authorList>
            <person name="Jurica M.S."/>
            <person name="Licklider L.J."/>
            <person name="Gygi S.P."/>
            <person name="Grigorieff N."/>
            <person name="Moore M.J."/>
        </authorList>
    </citation>
    <scope>IDENTIFICATION BY MASS SPECTROMETRY</scope>
    <scope>IDENTIFICATION IN THE SPLICEOSOMAL C COMPLEX</scope>
</reference>
<evidence type="ECO:0000255" key="1">
    <source>
        <dbReference type="PROSITE-ProRule" id="PRU00541"/>
    </source>
</evidence>
<evidence type="ECO:0000255" key="2">
    <source>
        <dbReference type="PROSITE-ProRule" id="PRU00542"/>
    </source>
</evidence>
<evidence type="ECO:0000269" key="3">
    <source>
    </source>
</evidence>
<evidence type="ECO:0000303" key="4">
    <source>
    </source>
</evidence>
<evidence type="ECO:0000305" key="5"/>
<keyword id="KW-0025">Alternative splicing</keyword>
<keyword id="KW-0067">ATP-binding</keyword>
<keyword id="KW-0347">Helicase</keyword>
<keyword id="KW-0378">Hydrolase</keyword>
<keyword id="KW-0507">mRNA processing</keyword>
<keyword id="KW-0508">mRNA splicing</keyword>
<keyword id="KW-0547">Nucleotide-binding</keyword>
<keyword id="KW-1267">Proteomics identification</keyword>
<keyword id="KW-1185">Reference proteome</keyword>
<keyword id="KW-0747">Spliceosome</keyword>
<comment type="function">
    <text>May be involved in pre-mRNA splicing.</text>
</comment>
<comment type="catalytic activity">
    <reaction>
        <text>ATP + H2O = ADP + phosphate + H(+)</text>
        <dbReference type="Rhea" id="RHEA:13065"/>
        <dbReference type="ChEBI" id="CHEBI:15377"/>
        <dbReference type="ChEBI" id="CHEBI:15378"/>
        <dbReference type="ChEBI" id="CHEBI:30616"/>
        <dbReference type="ChEBI" id="CHEBI:43474"/>
        <dbReference type="ChEBI" id="CHEBI:456216"/>
        <dbReference type="EC" id="3.6.4.13"/>
    </reaction>
</comment>
<comment type="subunit">
    <text evidence="3">Identified in the spliceosome C complex.</text>
</comment>
<comment type="alternative products">
    <event type="alternative splicing"/>
    <isoform>
        <id>Q9H5Z1-1</id>
        <name>1</name>
        <sequence type="displayed"/>
    </isoform>
    <isoform>
        <id>Q9H5Z1-2</id>
        <name>2</name>
        <sequence type="described" ref="VSP_047178"/>
    </isoform>
</comment>
<comment type="similarity">
    <text evidence="5">Belongs to the DEAD box helicase family. DEAH subfamily.</text>
</comment>
<comment type="sequence caution" evidence="5">
    <conflict type="erroneous initiation">
        <sequence resource="EMBL-CDS" id="BAB15166"/>
    </conflict>
    <text>Truncated N-terminus.</text>
</comment>
<sequence length="703" mass="78910">MAAPVGPVKFWRPGTEGPGVSISEERQSLAENSGTTVVYNPYAALSIEQQRQKLPVFKLRNHILYLIENYQTVVIVGETGCGKSTQIPQYLAEAGWTAEGRVVGVTQPRRVAAVTVAGRVAEERGAVLGHEVGYCIRFDDCTDQLATRIKFLTDGMLVREMMVDPLLTKYSVIMLDEAHERTLYTDIAIGLLKKIQKKRGDLRLIVASATLDADKFRDFFNQNETSDPARDTCVILTVEGRTFPVDIFYLQSPVPDYIKSTVETVVKIHQTEGDGDVLAFLTGQEEVETVVSMLIEQARALARTGMKRHLRVLPMYAGLPSFEQMKVFERVSRSVRKVIVATNVAETSITISGIVYVIDCGFVKLRAYNPRTAIECLVVVPVSQASANQRAGRGGRSRSGKCYRLYTEEAFDKLPQSTVPEMQRSNLAPVILQLKALGIDNVLRFHFMSPPPAQSMVQALELLYALGGLDKDCRLTEPLGMRIAEFPLNPMFAKMLLESGNFGCSQEILSIAAMMQIQNIFVVPPNQKSHAIRVHRKFAVEEGDHLTMLNIYEAFIKHNKDSKWCQEHFLNYKGLVRAATVREQLKKLLVKFQVPRKSSEGDPDLVLRCIVSGFFANAARFHSTGAYRTIRDDHELHIHPASVLYAEKPPRWVIYNEVIQTSKYYMRDVTAIESAWLLELAPHFYQQGTHLSLKAKRAKVQDP</sequence>
<feature type="chain" id="PRO_0000055168" description="Probable ATP-dependent RNA helicase DHX35">
    <location>
        <begin position="1"/>
        <end position="703"/>
    </location>
</feature>
<feature type="domain" description="Helicase ATP-binding" evidence="1">
    <location>
        <begin position="64"/>
        <end position="229"/>
    </location>
</feature>
<feature type="domain" description="Helicase C-terminal" evidence="2">
    <location>
        <begin position="261"/>
        <end position="438"/>
    </location>
</feature>
<feature type="short sequence motif" description="DEAH box">
    <location>
        <begin position="176"/>
        <end position="179"/>
    </location>
</feature>
<feature type="binding site" evidence="1">
    <location>
        <begin position="77"/>
        <end position="84"/>
    </location>
    <ligand>
        <name>ATP</name>
        <dbReference type="ChEBI" id="CHEBI:30616"/>
    </ligand>
</feature>
<feature type="splice variant" id="VSP_047178" description="In isoform 2." evidence="4">
    <location>
        <begin position="59"/>
        <end position="89"/>
    </location>
</feature>
<feature type="sequence variant" id="VAR_052184" description="In dbSNP:rs36053162.">
    <original>I</original>
    <variation>T</variation>
    <location>
        <position position="189"/>
    </location>
</feature>
<feature type="sequence variant" id="VAR_020211" description="In dbSNP:rs3752302.">
    <original>P</original>
    <variation>L</variation>
    <location>
        <position position="703"/>
    </location>
</feature>
<feature type="sequence conflict" description="In Ref. 1; BAG64452." evidence="5" ref="1">
    <original>T</original>
    <variation>I</variation>
    <location>
        <position position="35"/>
    </location>
</feature>
<feature type="sequence conflict" description="In Ref. 1; BAB15476." evidence="5" ref="1">
    <original>R</original>
    <variation>G</variation>
    <location>
        <position position="582"/>
    </location>
</feature>
<dbReference type="EC" id="3.6.4.13"/>
<dbReference type="EMBL" id="AK026412">
    <property type="protein sequence ID" value="BAB15476.1"/>
    <property type="molecule type" value="mRNA"/>
</dbReference>
<dbReference type="EMBL" id="AK025541">
    <property type="protein sequence ID" value="BAB15166.1"/>
    <property type="status" value="ALT_INIT"/>
    <property type="molecule type" value="mRNA"/>
</dbReference>
<dbReference type="EMBL" id="AK303396">
    <property type="protein sequence ID" value="BAG64452.1"/>
    <property type="molecule type" value="mRNA"/>
</dbReference>
<dbReference type="EMBL" id="AL023803">
    <property type="status" value="NOT_ANNOTATED_CDS"/>
    <property type="molecule type" value="Genomic_DNA"/>
</dbReference>
<dbReference type="EMBL" id="CH471077">
    <property type="protein sequence ID" value="EAW76006.1"/>
    <property type="molecule type" value="Genomic_DNA"/>
</dbReference>
<dbReference type="EMBL" id="BC132669">
    <property type="protein sequence ID" value="AAI32670.1"/>
    <property type="molecule type" value="mRNA"/>
</dbReference>
<dbReference type="CCDS" id="CCDS13310.1">
    <molecule id="Q9H5Z1-1"/>
</dbReference>
<dbReference type="CCDS" id="CCDS54463.1">
    <molecule id="Q9H5Z1-2"/>
</dbReference>
<dbReference type="RefSeq" id="NP_001177738.1">
    <molecule id="Q9H5Z1-2"/>
    <property type="nucleotide sequence ID" value="NM_001190809.2"/>
</dbReference>
<dbReference type="RefSeq" id="NP_068750.2">
    <molecule id="Q9H5Z1-1"/>
    <property type="nucleotide sequence ID" value="NM_021931.3"/>
</dbReference>
<dbReference type="SMR" id="Q9H5Z1"/>
<dbReference type="BioGRID" id="121945">
    <property type="interactions" value="77"/>
</dbReference>
<dbReference type="CORUM" id="Q9H5Z1"/>
<dbReference type="FunCoup" id="Q9H5Z1">
    <property type="interactions" value="2344"/>
</dbReference>
<dbReference type="IntAct" id="Q9H5Z1">
    <property type="interactions" value="54"/>
</dbReference>
<dbReference type="MINT" id="Q9H5Z1"/>
<dbReference type="STRING" id="9606.ENSP00000252011"/>
<dbReference type="BindingDB" id="Q9H5Z1"/>
<dbReference type="ChEMBL" id="CHEMBL5465358"/>
<dbReference type="GlyGen" id="Q9H5Z1">
    <property type="glycosylation" value="3 sites, 1 N-linked glycan (1 site), 1 O-linked glycan (1 site)"/>
</dbReference>
<dbReference type="iPTMnet" id="Q9H5Z1"/>
<dbReference type="MetOSite" id="Q9H5Z1"/>
<dbReference type="PhosphoSitePlus" id="Q9H5Z1"/>
<dbReference type="SwissPalm" id="Q9H5Z1"/>
<dbReference type="BioMuta" id="DHX35"/>
<dbReference type="jPOST" id="Q9H5Z1"/>
<dbReference type="MassIVE" id="Q9H5Z1"/>
<dbReference type="PaxDb" id="9606-ENSP00000252011"/>
<dbReference type="PeptideAtlas" id="Q9H5Z1"/>
<dbReference type="ProteomicsDB" id="24470"/>
<dbReference type="ProteomicsDB" id="80942">
    <molecule id="Q9H5Z1-1"/>
</dbReference>
<dbReference type="Pumba" id="Q9H5Z1"/>
<dbReference type="Antibodypedia" id="26936">
    <property type="antibodies" value="64 antibodies from 19 providers"/>
</dbReference>
<dbReference type="DNASU" id="60625"/>
<dbReference type="Ensembl" id="ENST00000252011.8">
    <molecule id="Q9H5Z1-1"/>
    <property type="protein sequence ID" value="ENSP00000252011.3"/>
    <property type="gene ID" value="ENSG00000101452.15"/>
</dbReference>
<dbReference type="Ensembl" id="ENST00000373323.8">
    <molecule id="Q9H5Z1-2"/>
    <property type="protein sequence ID" value="ENSP00000362420.3"/>
    <property type="gene ID" value="ENSG00000101452.15"/>
</dbReference>
<dbReference type="GeneID" id="60625"/>
<dbReference type="KEGG" id="hsa:60625"/>
<dbReference type="MANE-Select" id="ENST00000252011.8">
    <property type="protein sequence ID" value="ENSP00000252011.3"/>
    <property type="RefSeq nucleotide sequence ID" value="NM_021931.4"/>
    <property type="RefSeq protein sequence ID" value="NP_068750.2"/>
</dbReference>
<dbReference type="UCSC" id="uc002xjh.4">
    <molecule id="Q9H5Z1-1"/>
    <property type="organism name" value="human"/>
</dbReference>
<dbReference type="AGR" id="HGNC:15861"/>
<dbReference type="CTD" id="60625"/>
<dbReference type="DisGeNET" id="60625"/>
<dbReference type="GeneCards" id="DHX35"/>
<dbReference type="HGNC" id="HGNC:15861">
    <property type="gene designation" value="DHX35"/>
</dbReference>
<dbReference type="HPA" id="ENSG00000101452">
    <property type="expression patterns" value="Low tissue specificity"/>
</dbReference>
<dbReference type="neXtProt" id="NX_Q9H5Z1"/>
<dbReference type="OpenTargets" id="ENSG00000101452"/>
<dbReference type="PharmGKB" id="PA27222"/>
<dbReference type="VEuPathDB" id="HostDB:ENSG00000101452"/>
<dbReference type="eggNOG" id="KOG0922">
    <property type="taxonomic scope" value="Eukaryota"/>
</dbReference>
<dbReference type="GeneTree" id="ENSGT00940000156142"/>
<dbReference type="InParanoid" id="Q9H5Z1"/>
<dbReference type="OMA" id="FHEVMET"/>
<dbReference type="OrthoDB" id="10253254at2759"/>
<dbReference type="PAN-GO" id="Q9H5Z1">
    <property type="GO annotations" value="3 GO annotations based on evolutionary models"/>
</dbReference>
<dbReference type="PhylomeDB" id="Q9H5Z1"/>
<dbReference type="TreeFam" id="TF105843"/>
<dbReference type="PathwayCommons" id="Q9H5Z1"/>
<dbReference type="Reactome" id="R-HSA-72163">
    <property type="pathway name" value="mRNA Splicing - Major Pathway"/>
</dbReference>
<dbReference type="SignaLink" id="Q9H5Z1"/>
<dbReference type="BioGRID-ORCS" id="60625">
    <property type="hits" value="204 hits in 1171 CRISPR screens"/>
</dbReference>
<dbReference type="ChiTaRS" id="DHX35">
    <property type="organism name" value="human"/>
</dbReference>
<dbReference type="GenomeRNAi" id="60625"/>
<dbReference type="Pharos" id="Q9H5Z1">
    <property type="development level" value="Tbio"/>
</dbReference>
<dbReference type="PRO" id="PR:Q9H5Z1"/>
<dbReference type="Proteomes" id="UP000005640">
    <property type="component" value="Chromosome 20"/>
</dbReference>
<dbReference type="RNAct" id="Q9H5Z1">
    <property type="molecule type" value="protein"/>
</dbReference>
<dbReference type="Bgee" id="ENSG00000101452">
    <property type="expression patterns" value="Expressed in lower esophagus muscularis layer and 132 other cell types or tissues"/>
</dbReference>
<dbReference type="ExpressionAtlas" id="Q9H5Z1">
    <property type="expression patterns" value="baseline and differential"/>
</dbReference>
<dbReference type="GO" id="GO:0071013">
    <property type="term" value="C:catalytic step 2 spliceosome"/>
    <property type="evidence" value="ECO:0000314"/>
    <property type="project" value="UniProtKB"/>
</dbReference>
<dbReference type="GO" id="GO:0005654">
    <property type="term" value="C:nucleoplasm"/>
    <property type="evidence" value="ECO:0000304"/>
    <property type="project" value="Reactome"/>
</dbReference>
<dbReference type="GO" id="GO:0005524">
    <property type="term" value="F:ATP binding"/>
    <property type="evidence" value="ECO:0007669"/>
    <property type="project" value="UniProtKB-KW"/>
</dbReference>
<dbReference type="GO" id="GO:0016887">
    <property type="term" value="F:ATP hydrolysis activity"/>
    <property type="evidence" value="ECO:0007669"/>
    <property type="project" value="RHEA"/>
</dbReference>
<dbReference type="GO" id="GO:0004386">
    <property type="term" value="F:helicase activity"/>
    <property type="evidence" value="ECO:0000318"/>
    <property type="project" value="GO_Central"/>
</dbReference>
<dbReference type="GO" id="GO:0003723">
    <property type="term" value="F:RNA binding"/>
    <property type="evidence" value="ECO:0000318"/>
    <property type="project" value="GO_Central"/>
</dbReference>
<dbReference type="GO" id="GO:0003724">
    <property type="term" value="F:RNA helicase activity"/>
    <property type="evidence" value="ECO:0007669"/>
    <property type="project" value="UniProtKB-EC"/>
</dbReference>
<dbReference type="GO" id="GO:0001701">
    <property type="term" value="P:in utero embryonic development"/>
    <property type="evidence" value="ECO:0007669"/>
    <property type="project" value="Ensembl"/>
</dbReference>
<dbReference type="GO" id="GO:0000398">
    <property type="term" value="P:mRNA splicing, via spliceosome"/>
    <property type="evidence" value="ECO:0000305"/>
    <property type="project" value="UniProtKB"/>
</dbReference>
<dbReference type="CDD" id="cd17980">
    <property type="entry name" value="DEXHc_DHX35"/>
    <property type="match status" value="1"/>
</dbReference>
<dbReference type="CDD" id="cd18791">
    <property type="entry name" value="SF2_C_RHA"/>
    <property type="match status" value="1"/>
</dbReference>
<dbReference type="FunFam" id="3.40.50.300:FF:000007">
    <property type="entry name" value="Pre-mRNA-splicing factor ATP-dependent RNA helicase"/>
    <property type="match status" value="1"/>
</dbReference>
<dbReference type="FunFam" id="1.20.120.1080:FF:000007">
    <property type="entry name" value="Probable ATP-dependent RNA helicase DHX35"/>
    <property type="match status" value="1"/>
</dbReference>
<dbReference type="FunFam" id="3.40.50.300:FF:000578">
    <property type="entry name" value="probable ATP-dependent RNA helicase DHX35"/>
    <property type="match status" value="1"/>
</dbReference>
<dbReference type="Gene3D" id="1.20.120.1080">
    <property type="match status" value="1"/>
</dbReference>
<dbReference type="Gene3D" id="3.40.50.300">
    <property type="entry name" value="P-loop containing nucleotide triphosphate hydrolases"/>
    <property type="match status" value="2"/>
</dbReference>
<dbReference type="InterPro" id="IPR011709">
    <property type="entry name" value="DEAD-box_helicase_OB_fold"/>
</dbReference>
<dbReference type="InterPro" id="IPR002464">
    <property type="entry name" value="DNA/RNA_helicase_DEAH_CS"/>
</dbReference>
<dbReference type="InterPro" id="IPR048333">
    <property type="entry name" value="HA2_WH"/>
</dbReference>
<dbReference type="InterPro" id="IPR007502">
    <property type="entry name" value="Helicase-assoc_dom"/>
</dbReference>
<dbReference type="InterPro" id="IPR014001">
    <property type="entry name" value="Helicase_ATP-bd"/>
</dbReference>
<dbReference type="InterPro" id="IPR001650">
    <property type="entry name" value="Helicase_C-like"/>
</dbReference>
<dbReference type="InterPro" id="IPR027417">
    <property type="entry name" value="P-loop_NTPase"/>
</dbReference>
<dbReference type="PANTHER" id="PTHR18934">
    <property type="entry name" value="ATP-DEPENDENT RNA HELICASE"/>
    <property type="match status" value="1"/>
</dbReference>
<dbReference type="PANTHER" id="PTHR18934:SF136">
    <property type="entry name" value="ATP-DEPENDENT RNA HELICASE DHX35-RELATED"/>
    <property type="match status" value="1"/>
</dbReference>
<dbReference type="Pfam" id="PF21010">
    <property type="entry name" value="HA2_C"/>
    <property type="match status" value="1"/>
</dbReference>
<dbReference type="Pfam" id="PF04408">
    <property type="entry name" value="HA2_N"/>
    <property type="match status" value="1"/>
</dbReference>
<dbReference type="Pfam" id="PF00271">
    <property type="entry name" value="Helicase_C"/>
    <property type="match status" value="1"/>
</dbReference>
<dbReference type="Pfam" id="PF07717">
    <property type="entry name" value="OB_NTP_bind"/>
    <property type="match status" value="1"/>
</dbReference>
<dbReference type="SMART" id="SM00487">
    <property type="entry name" value="DEXDc"/>
    <property type="match status" value="1"/>
</dbReference>
<dbReference type="SMART" id="SM00847">
    <property type="entry name" value="HA2"/>
    <property type="match status" value="1"/>
</dbReference>
<dbReference type="SMART" id="SM00490">
    <property type="entry name" value="HELICc"/>
    <property type="match status" value="1"/>
</dbReference>
<dbReference type="SUPFAM" id="SSF52540">
    <property type="entry name" value="P-loop containing nucleoside triphosphate hydrolases"/>
    <property type="match status" value="1"/>
</dbReference>
<dbReference type="PROSITE" id="PS00690">
    <property type="entry name" value="DEAH_ATP_HELICASE"/>
    <property type="match status" value="1"/>
</dbReference>
<dbReference type="PROSITE" id="PS51192">
    <property type="entry name" value="HELICASE_ATP_BIND_1"/>
    <property type="match status" value="1"/>
</dbReference>
<dbReference type="PROSITE" id="PS51194">
    <property type="entry name" value="HELICASE_CTER"/>
    <property type="match status" value="1"/>
</dbReference>
<name>DHX35_HUMAN</name>
<protein>
    <recommendedName>
        <fullName>Probable ATP-dependent RNA helicase DHX35</fullName>
        <ecNumber>3.6.4.13</ecNumber>
    </recommendedName>
    <alternativeName>
        <fullName>DEAH box protein 35</fullName>
    </alternativeName>
</protein>
<organism>
    <name type="scientific">Homo sapiens</name>
    <name type="common">Human</name>
    <dbReference type="NCBI Taxonomy" id="9606"/>
    <lineage>
        <taxon>Eukaryota</taxon>
        <taxon>Metazoa</taxon>
        <taxon>Chordata</taxon>
        <taxon>Craniata</taxon>
        <taxon>Vertebrata</taxon>
        <taxon>Euteleostomi</taxon>
        <taxon>Mammalia</taxon>
        <taxon>Eutheria</taxon>
        <taxon>Euarchontoglires</taxon>
        <taxon>Primates</taxon>
        <taxon>Haplorrhini</taxon>
        <taxon>Catarrhini</taxon>
        <taxon>Hominidae</taxon>
        <taxon>Homo</taxon>
    </lineage>
</organism>
<proteinExistence type="evidence at protein level"/>